<proteinExistence type="evidence at protein level"/>
<evidence type="ECO:0000255" key="1">
    <source>
        <dbReference type="PROSITE-ProRule" id="PRU00711"/>
    </source>
</evidence>
<evidence type="ECO:0007829" key="2">
    <source>
        <dbReference type="PDB" id="1DUR"/>
    </source>
</evidence>
<reference key="1">
    <citation type="journal article" date="1968" name="J. Biol. Chem.">
        <title>Non-heme iron proteins. IX. The amino acid sequence of ferredoxin from Micrococcus aerogenes.</title>
        <authorList>
            <person name="Tsunoda J.N."/>
            <person name="Yasunobu K.T."/>
            <person name="Whiteley H.R."/>
        </authorList>
    </citation>
    <scope>PROTEIN SEQUENCE</scope>
</reference>
<reference key="2">
    <citation type="journal article" date="1973" name="J. Biol. Chem.">
        <title>Structure of a bacterial ferredoxin.</title>
        <authorList>
            <person name="Adman E.T."/>
            <person name="Sieker L.C."/>
            <person name="Jensen L.H."/>
        </authorList>
    </citation>
    <scope>X-RAY CRYSTALLOGRAPHY (2.8 ANGSTROMS)</scope>
</reference>
<reference key="3">
    <citation type="journal article" date="1976" name="J. Biol. Chem.">
        <title>Structure of Peptococcus aerogenes ferredoxin. Refinement at 2-A resolution.</title>
        <authorList>
            <person name="Adman E.T."/>
            <person name="Sieker L.C."/>
            <person name="Jensen L.H."/>
        </authorList>
    </citation>
    <scope>X-RAY CRYSTALLOGRAPHY (2.0 ANGSTROMS)</scope>
</reference>
<organism>
    <name type="scientific">Peptoniphilus asaccharolyticus</name>
    <name type="common">Peptostreptococcus asaccharolyticus</name>
    <dbReference type="NCBI Taxonomy" id="1258"/>
    <lineage>
        <taxon>Bacteria</taxon>
        <taxon>Bacillati</taxon>
        <taxon>Bacillota</taxon>
        <taxon>Tissierellia</taxon>
        <taxon>Tissierellales</taxon>
        <taxon>Peptoniphilaceae</taxon>
        <taxon>Peptoniphilus</taxon>
    </lineage>
</organism>
<name>FER_PEPAS</name>
<keyword id="KW-0002">3D-structure</keyword>
<keyword id="KW-0004">4Fe-4S</keyword>
<keyword id="KW-0903">Direct protein sequencing</keyword>
<keyword id="KW-0249">Electron transport</keyword>
<keyword id="KW-0408">Iron</keyword>
<keyword id="KW-0411">Iron-sulfur</keyword>
<keyword id="KW-0479">Metal-binding</keyword>
<keyword id="KW-0677">Repeat</keyword>
<keyword id="KW-0813">Transport</keyword>
<protein>
    <recommendedName>
        <fullName>Ferredoxin</fullName>
    </recommendedName>
</protein>
<accession>P00193</accession>
<comment type="function">
    <text>Ferredoxins are iron-sulfur proteins that transfer electrons in a wide variety of metabolic reactions.</text>
</comment>
<comment type="cofactor">
    <cofactor>
        <name>[4Fe-4S] cluster</name>
        <dbReference type="ChEBI" id="CHEBI:49883"/>
    </cofactor>
    <text>Binds 2 [4Fe-4S] clusters.</text>
</comment>
<feature type="chain" id="PRO_0000159118" description="Ferredoxin">
    <location>
        <begin position="1"/>
        <end position="54"/>
    </location>
</feature>
<feature type="domain" description="4Fe-4S ferredoxin-type 1" evidence="1">
    <location>
        <begin position="2"/>
        <end position="25"/>
    </location>
</feature>
<feature type="domain" description="4Fe-4S ferredoxin-type 2" evidence="1">
    <location>
        <begin position="26"/>
        <end position="54"/>
    </location>
</feature>
<feature type="binding site">
    <location>
        <position position="8"/>
    </location>
    <ligand>
        <name>[4Fe-4S] cluster</name>
        <dbReference type="ChEBI" id="CHEBI:49883"/>
        <label>1</label>
    </ligand>
</feature>
<feature type="binding site">
    <location>
        <position position="11"/>
    </location>
    <ligand>
        <name>[4Fe-4S] cluster</name>
        <dbReference type="ChEBI" id="CHEBI:49883"/>
        <label>1</label>
    </ligand>
</feature>
<feature type="binding site">
    <location>
        <position position="14"/>
    </location>
    <ligand>
        <name>[4Fe-4S] cluster</name>
        <dbReference type="ChEBI" id="CHEBI:49883"/>
        <label>1</label>
    </ligand>
</feature>
<feature type="binding site">
    <location>
        <position position="18"/>
    </location>
    <ligand>
        <name>[4Fe-4S] cluster</name>
        <dbReference type="ChEBI" id="CHEBI:49883"/>
        <label>2</label>
    </ligand>
</feature>
<feature type="binding site">
    <location>
        <position position="35"/>
    </location>
    <ligand>
        <name>[4Fe-4S] cluster</name>
        <dbReference type="ChEBI" id="CHEBI:49883"/>
        <label>2</label>
    </ligand>
</feature>
<feature type="binding site">
    <location>
        <position position="38"/>
    </location>
    <ligand>
        <name>[4Fe-4S] cluster</name>
        <dbReference type="ChEBI" id="CHEBI:49883"/>
        <label>2</label>
    </ligand>
</feature>
<feature type="binding site">
    <location>
        <position position="41"/>
    </location>
    <ligand>
        <name>[4Fe-4S] cluster</name>
        <dbReference type="ChEBI" id="CHEBI:49883"/>
        <label>2</label>
    </ligand>
</feature>
<feature type="binding site">
    <location>
        <position position="45"/>
    </location>
    <ligand>
        <name>[4Fe-4S] cluster</name>
        <dbReference type="ChEBI" id="CHEBI:49883"/>
        <label>1</label>
    </ligand>
</feature>
<feature type="strand" evidence="2">
    <location>
        <begin position="2"/>
        <end position="4"/>
    </location>
</feature>
<feature type="helix" evidence="2">
    <location>
        <begin position="15"/>
        <end position="17"/>
    </location>
</feature>
<feature type="strand" evidence="2">
    <location>
        <begin position="25"/>
        <end position="27"/>
    </location>
</feature>
<feature type="turn" evidence="2">
    <location>
        <begin position="32"/>
        <end position="34"/>
    </location>
</feature>
<feature type="helix" evidence="2">
    <location>
        <begin position="40"/>
        <end position="44"/>
    </location>
</feature>
<feature type="strand" evidence="2">
    <location>
        <begin position="50"/>
        <end position="52"/>
    </location>
</feature>
<sequence>AYVINDSCIACGACKPECPVNIQQGSIYAIDADSCIDCGSCASVCPVGAPNPED</sequence>
<dbReference type="PIR" id="A00196">
    <property type="entry name" value="FEPE"/>
</dbReference>
<dbReference type="PDB" id="1DUR">
    <property type="method" value="X-ray"/>
    <property type="resolution" value="2.00 A"/>
    <property type="chains" value="A=1-54"/>
</dbReference>
<dbReference type="PDBsum" id="1DUR"/>
<dbReference type="SMR" id="P00193"/>
<dbReference type="EvolutionaryTrace" id="P00193"/>
<dbReference type="GO" id="GO:0051539">
    <property type="term" value="F:4 iron, 4 sulfur cluster binding"/>
    <property type="evidence" value="ECO:0007669"/>
    <property type="project" value="UniProtKB-KW"/>
</dbReference>
<dbReference type="GO" id="GO:0046872">
    <property type="term" value="F:metal ion binding"/>
    <property type="evidence" value="ECO:0007669"/>
    <property type="project" value="UniProtKB-KW"/>
</dbReference>
<dbReference type="Gene3D" id="3.30.70.20">
    <property type="match status" value="1"/>
</dbReference>
<dbReference type="InterPro" id="IPR017896">
    <property type="entry name" value="4Fe4S_Fe-S-bd"/>
</dbReference>
<dbReference type="InterPro" id="IPR017900">
    <property type="entry name" value="4Fe4S_Fe_S_CS"/>
</dbReference>
<dbReference type="InterPro" id="IPR050157">
    <property type="entry name" value="PSI_iron-sulfur_center"/>
</dbReference>
<dbReference type="PANTHER" id="PTHR24960:SF79">
    <property type="entry name" value="PHOTOSYSTEM I IRON-SULFUR CENTER"/>
    <property type="match status" value="1"/>
</dbReference>
<dbReference type="PANTHER" id="PTHR24960">
    <property type="entry name" value="PHOTOSYSTEM I IRON-SULFUR CENTER-RELATED"/>
    <property type="match status" value="1"/>
</dbReference>
<dbReference type="Pfam" id="PF00037">
    <property type="entry name" value="Fer4"/>
    <property type="match status" value="2"/>
</dbReference>
<dbReference type="SUPFAM" id="SSF54862">
    <property type="entry name" value="4Fe-4S ferredoxins"/>
    <property type="match status" value="1"/>
</dbReference>
<dbReference type="PROSITE" id="PS00198">
    <property type="entry name" value="4FE4S_FER_1"/>
    <property type="match status" value="2"/>
</dbReference>
<dbReference type="PROSITE" id="PS51379">
    <property type="entry name" value="4FE4S_FER_2"/>
    <property type="match status" value="2"/>
</dbReference>